<feature type="peptide" id="PRO_0000262681" description="Conotoxin Fi11.11">
    <location>
        <begin position="1" status="less than"/>
        <end position="30"/>
    </location>
</feature>
<feature type="propeptide" id="PRO_0000262682">
    <location>
        <begin position="35"/>
        <end position="44"/>
    </location>
</feature>
<feature type="modified residue" description="Asparagine amide" evidence="1">
    <location>
        <position position="30"/>
    </location>
</feature>
<feature type="disulfide bond" evidence="2">
    <location>
        <begin position="1"/>
        <end position="15"/>
    </location>
</feature>
<feature type="disulfide bond" evidence="2">
    <location>
        <begin position="8"/>
        <end position="20"/>
    </location>
</feature>
<feature type="disulfide bond" evidence="2">
    <location>
        <begin position="14"/>
        <end position="24"/>
    </location>
</feature>
<feature type="disulfide bond" evidence="2">
    <location>
        <begin position="19"/>
        <end position="28"/>
    </location>
</feature>
<feature type="non-terminal residue">
    <location>
        <position position="1"/>
    </location>
</feature>
<dbReference type="SMR" id="P0C255"/>
<dbReference type="ConoServer" id="1456">
    <property type="toxin name" value="Fi11.11 precursor"/>
</dbReference>
<dbReference type="GO" id="GO:0005576">
    <property type="term" value="C:extracellular region"/>
    <property type="evidence" value="ECO:0007669"/>
    <property type="project" value="UniProtKB-SubCell"/>
</dbReference>
<dbReference type="GO" id="GO:0090729">
    <property type="term" value="F:toxin activity"/>
    <property type="evidence" value="ECO:0007669"/>
    <property type="project" value="UniProtKB-KW"/>
</dbReference>
<dbReference type="InterPro" id="IPR013141">
    <property type="entry name" value="Conotoxin-I_CS"/>
</dbReference>
<dbReference type="InterPro" id="IPR020242">
    <property type="entry name" value="Conotoxin_I2"/>
</dbReference>
<dbReference type="Pfam" id="PF17557">
    <property type="entry name" value="Conotoxin_I2"/>
    <property type="match status" value="1"/>
</dbReference>
<dbReference type="PROSITE" id="PS60019">
    <property type="entry name" value="I_CONOTOXIN"/>
    <property type="match status" value="1"/>
</dbReference>
<sequence>CHHEGLPCTSGDGCCGMECCGGVCSSHCGNGRRRQVPLKSFGQR</sequence>
<reference key="1">
    <citation type="journal article" date="2005" name="FEBS J.">
        <title>Characterization of D-amino-acid-containing excitatory conotoxins and redefinition of the I-conotoxin superfamily.</title>
        <authorList>
            <person name="Buczek O."/>
            <person name="Yoshikami D."/>
            <person name="Watkins M."/>
            <person name="Bulaj G."/>
            <person name="Jimenez E.C."/>
            <person name="Olivera B.M."/>
        </authorList>
    </citation>
    <scope>NUCLEOTIDE SEQUENCE [MRNA]</scope>
    <source>
        <tissue>Venom duct</tissue>
    </source>
</reference>
<reference key="2">
    <citation type="journal article" date="2005" name="FEBS J.">
        <authorList>
            <person name="Buczek O."/>
            <person name="Yoshikami D."/>
            <person name="Watkins M."/>
            <person name="Bulaj G."/>
            <person name="Jimenez E.C."/>
            <person name="Olivera B.M."/>
        </authorList>
    </citation>
    <scope>ERRATUM OF PUBMED:16098199</scope>
</reference>
<evidence type="ECO:0000250" key="1"/>
<evidence type="ECO:0000250" key="2">
    <source>
        <dbReference type="UniProtKB" id="Q7Z094"/>
    </source>
</evidence>
<evidence type="ECO:0000305" key="3"/>
<organism>
    <name type="scientific">Conus figulinus</name>
    <name type="common">Fig cone</name>
    <dbReference type="NCBI Taxonomy" id="101301"/>
    <lineage>
        <taxon>Eukaryota</taxon>
        <taxon>Metazoa</taxon>
        <taxon>Spiralia</taxon>
        <taxon>Lophotrochozoa</taxon>
        <taxon>Mollusca</taxon>
        <taxon>Gastropoda</taxon>
        <taxon>Caenogastropoda</taxon>
        <taxon>Neogastropoda</taxon>
        <taxon>Conoidea</taxon>
        <taxon>Conidae</taxon>
        <taxon>Conus</taxon>
        <taxon>Dendroconus</taxon>
    </lineage>
</organism>
<name>I2BB_CONFI</name>
<comment type="subcellular location">
    <subcellularLocation>
        <location evidence="1">Secreted</location>
    </subcellularLocation>
</comment>
<comment type="tissue specificity">
    <text>Expressed by the venom duct.</text>
</comment>
<comment type="domain">
    <text>The cysteine framework is XI (C-C-CC-CC-C-C).</text>
</comment>
<comment type="similarity">
    <text evidence="3">Belongs to the conotoxin I2 superfamily.</text>
</comment>
<keyword id="KW-0027">Amidation</keyword>
<keyword id="KW-0165">Cleavage on pair of basic residues</keyword>
<keyword id="KW-1015">Disulfide bond</keyword>
<keyword id="KW-0964">Secreted</keyword>
<keyword id="KW-0800">Toxin</keyword>
<proteinExistence type="evidence at transcript level"/>
<protein>
    <recommendedName>
        <fullName>Conotoxin Fi11.11</fullName>
    </recommendedName>
</protein>
<accession>P0C255</accession>